<reference key="1">
    <citation type="journal article" date="2007" name="Genome Biol.">
        <title>Comparison of Francisella tularensis genomes reveals evolutionary events associated with the emergence of human pathogenic strains.</title>
        <authorList>
            <person name="Rohmer L."/>
            <person name="Fong C."/>
            <person name="Abmayr S."/>
            <person name="Wasnick M."/>
            <person name="Larson Freeman T.J."/>
            <person name="Radey M."/>
            <person name="Guina T."/>
            <person name="Svensson K."/>
            <person name="Hayden H.S."/>
            <person name="Jacobs M."/>
            <person name="Gallagher L.A."/>
            <person name="Manoil C."/>
            <person name="Ernst R.K."/>
            <person name="Drees B."/>
            <person name="Buckley D."/>
            <person name="Haugen E."/>
            <person name="Bovee D."/>
            <person name="Zhou Y."/>
            <person name="Chang J."/>
            <person name="Levy R."/>
            <person name="Lim R."/>
            <person name="Gillett W."/>
            <person name="Guenthener D."/>
            <person name="Kang A."/>
            <person name="Shaffer S.A."/>
            <person name="Taylor G."/>
            <person name="Chen J."/>
            <person name="Gallis B."/>
            <person name="D'Argenio D.A."/>
            <person name="Forsman M."/>
            <person name="Olson M.V."/>
            <person name="Goodlett D.R."/>
            <person name="Kaul R."/>
            <person name="Miller S.I."/>
            <person name="Brittnacher M.J."/>
        </authorList>
    </citation>
    <scope>NUCLEOTIDE SEQUENCE [LARGE SCALE GENOMIC DNA]</scope>
    <source>
        <strain>U112</strain>
    </source>
</reference>
<protein>
    <recommendedName>
        <fullName evidence="1">tRNA-cytidine(32) 2-sulfurtransferase 1</fullName>
        <ecNumber evidence="1">2.8.1.-</ecNumber>
    </recommendedName>
    <alternativeName>
        <fullName evidence="1">Two-thiocytidine biosynthesis protein A 1</fullName>
    </alternativeName>
    <alternativeName>
        <fullName evidence="1">tRNA 2-thiocytidine biosynthesis protein TtcA 1</fullName>
    </alternativeName>
</protein>
<sequence length="267" mass="30855">MTNNTDKQTLKKLERQILRKTAQAINQYNMIEDGDKIMVCLSGGKDSYCLLEMLLLLQKKAPISFEIIAVNLDQKQPGFPEEVLPNYLKNKGVEFHIIQRDTYSVVKRVIPEGKTTCGLCSRMRRGILYDFAEENSVTKVALGHHRDDIIETFFLNLFYNGSIKAMPAKLLSDDKRNIVIRPLAFVSEKETLEYSQLKEFPIIPCNLCGSQDNLQRVFIKDMLNRWEQNNPERKNVIFKALSNISPSQMLDKELFDFINISKDDIQR</sequence>
<evidence type="ECO:0000255" key="1">
    <source>
        <dbReference type="HAMAP-Rule" id="MF_01850"/>
    </source>
</evidence>
<gene>
    <name evidence="1" type="primary">ttcA1</name>
    <name type="ordered locus">FTN_0920</name>
</gene>
<comment type="function">
    <text evidence="1">Catalyzes the ATP-dependent 2-thiolation of cytidine in position 32 of tRNA, to form 2-thiocytidine (s(2)C32). The sulfur atoms are provided by the cysteine/cysteine desulfurase (IscS) system.</text>
</comment>
<comment type="catalytic activity">
    <reaction evidence="1">
        <text>cytidine(32) in tRNA + S-sulfanyl-L-cysteinyl-[cysteine desulfurase] + AH2 + ATP = 2-thiocytidine(32) in tRNA + L-cysteinyl-[cysteine desulfurase] + A + AMP + diphosphate + H(+)</text>
        <dbReference type="Rhea" id="RHEA:57048"/>
        <dbReference type="Rhea" id="RHEA-COMP:10288"/>
        <dbReference type="Rhea" id="RHEA-COMP:12157"/>
        <dbReference type="Rhea" id="RHEA-COMP:12158"/>
        <dbReference type="Rhea" id="RHEA-COMP:14821"/>
        <dbReference type="ChEBI" id="CHEBI:13193"/>
        <dbReference type="ChEBI" id="CHEBI:15378"/>
        <dbReference type="ChEBI" id="CHEBI:17499"/>
        <dbReference type="ChEBI" id="CHEBI:29950"/>
        <dbReference type="ChEBI" id="CHEBI:30616"/>
        <dbReference type="ChEBI" id="CHEBI:33019"/>
        <dbReference type="ChEBI" id="CHEBI:61963"/>
        <dbReference type="ChEBI" id="CHEBI:82748"/>
        <dbReference type="ChEBI" id="CHEBI:141453"/>
        <dbReference type="ChEBI" id="CHEBI:456215"/>
    </reaction>
    <physiologicalReaction direction="left-to-right" evidence="1">
        <dbReference type="Rhea" id="RHEA:57049"/>
    </physiologicalReaction>
</comment>
<comment type="cofactor">
    <cofactor evidence="1">
        <name>Mg(2+)</name>
        <dbReference type="ChEBI" id="CHEBI:18420"/>
    </cofactor>
</comment>
<comment type="cofactor">
    <cofactor evidence="1">
        <name>[4Fe-4S] cluster</name>
        <dbReference type="ChEBI" id="CHEBI:49883"/>
    </cofactor>
    <text evidence="1">Binds 1 [4Fe-4S] cluster per subunit. The cluster is chelated by three Cys residues, the fourth Fe has a free coordination site that may bind a sulfur atom transferred from the persulfide of IscS.</text>
</comment>
<comment type="pathway">
    <text evidence="1">tRNA modification.</text>
</comment>
<comment type="subunit">
    <text evidence="1">Homodimer.</text>
</comment>
<comment type="subcellular location">
    <subcellularLocation>
        <location evidence="1">Cytoplasm</location>
    </subcellularLocation>
</comment>
<comment type="miscellaneous">
    <text evidence="1">The thiolation reaction likely consists of two steps: a first activation step by ATP to form an adenylated intermediate of the target base of tRNA, and a second nucleophilic substitution step of the sulfur (S) atom supplied by the hydrosulfide attached to the Fe-S cluster.</text>
</comment>
<comment type="similarity">
    <text evidence="1">Belongs to the TtcA family.</text>
</comment>
<proteinExistence type="inferred from homology"/>
<accession>A0Q6E3</accession>
<feature type="chain" id="PRO_0000348736" description="tRNA-cytidine(32) 2-sulfurtransferase 1">
    <location>
        <begin position="1"/>
        <end position="267"/>
    </location>
</feature>
<feature type="short sequence motif" description="PP-loop motif" evidence="1">
    <location>
        <begin position="42"/>
        <end position="47"/>
    </location>
</feature>
<feature type="binding site" evidence="1">
    <location>
        <position position="117"/>
    </location>
    <ligand>
        <name>[4Fe-4S] cluster</name>
        <dbReference type="ChEBI" id="CHEBI:49883"/>
    </ligand>
</feature>
<feature type="binding site" evidence="1">
    <location>
        <position position="120"/>
    </location>
    <ligand>
        <name>[4Fe-4S] cluster</name>
        <dbReference type="ChEBI" id="CHEBI:49883"/>
    </ligand>
</feature>
<feature type="binding site" evidence="1">
    <location>
        <position position="208"/>
    </location>
    <ligand>
        <name>[4Fe-4S] cluster</name>
        <dbReference type="ChEBI" id="CHEBI:49883"/>
    </ligand>
</feature>
<name>TTCA1_FRATN</name>
<organism>
    <name type="scientific">Francisella tularensis subsp. novicida (strain U112)</name>
    <dbReference type="NCBI Taxonomy" id="401614"/>
    <lineage>
        <taxon>Bacteria</taxon>
        <taxon>Pseudomonadati</taxon>
        <taxon>Pseudomonadota</taxon>
        <taxon>Gammaproteobacteria</taxon>
        <taxon>Thiotrichales</taxon>
        <taxon>Francisellaceae</taxon>
        <taxon>Francisella</taxon>
    </lineage>
</organism>
<dbReference type="EC" id="2.8.1.-" evidence="1"/>
<dbReference type="EMBL" id="CP000439">
    <property type="protein sequence ID" value="ABK89808.1"/>
    <property type="molecule type" value="Genomic_DNA"/>
</dbReference>
<dbReference type="RefSeq" id="WP_003039257.1">
    <property type="nucleotide sequence ID" value="NC_008601.1"/>
</dbReference>
<dbReference type="SMR" id="A0Q6E3"/>
<dbReference type="KEGG" id="ftn:FTN_0920"/>
<dbReference type="KEGG" id="ftx:AW25_1098"/>
<dbReference type="BioCyc" id="FTUL401614:G1G75-958-MONOMER"/>
<dbReference type="Proteomes" id="UP000000762">
    <property type="component" value="Chromosome"/>
</dbReference>
<dbReference type="GO" id="GO:0005737">
    <property type="term" value="C:cytoplasm"/>
    <property type="evidence" value="ECO:0007669"/>
    <property type="project" value="UniProtKB-SubCell"/>
</dbReference>
<dbReference type="GO" id="GO:0051539">
    <property type="term" value="F:4 iron, 4 sulfur cluster binding"/>
    <property type="evidence" value="ECO:0007669"/>
    <property type="project" value="UniProtKB-UniRule"/>
</dbReference>
<dbReference type="GO" id="GO:0005524">
    <property type="term" value="F:ATP binding"/>
    <property type="evidence" value="ECO:0007669"/>
    <property type="project" value="UniProtKB-UniRule"/>
</dbReference>
<dbReference type="GO" id="GO:0000287">
    <property type="term" value="F:magnesium ion binding"/>
    <property type="evidence" value="ECO:0007669"/>
    <property type="project" value="UniProtKB-UniRule"/>
</dbReference>
<dbReference type="GO" id="GO:0016783">
    <property type="term" value="F:sulfurtransferase activity"/>
    <property type="evidence" value="ECO:0007669"/>
    <property type="project" value="UniProtKB-UniRule"/>
</dbReference>
<dbReference type="GO" id="GO:0000049">
    <property type="term" value="F:tRNA binding"/>
    <property type="evidence" value="ECO:0007669"/>
    <property type="project" value="UniProtKB-KW"/>
</dbReference>
<dbReference type="GO" id="GO:0034227">
    <property type="term" value="P:tRNA thio-modification"/>
    <property type="evidence" value="ECO:0007669"/>
    <property type="project" value="UniProtKB-UniRule"/>
</dbReference>
<dbReference type="CDD" id="cd24138">
    <property type="entry name" value="TtcA-like"/>
    <property type="match status" value="1"/>
</dbReference>
<dbReference type="Gene3D" id="3.40.50.620">
    <property type="entry name" value="HUPs"/>
    <property type="match status" value="1"/>
</dbReference>
<dbReference type="HAMAP" id="MF_01850">
    <property type="entry name" value="TtcA"/>
    <property type="match status" value="1"/>
</dbReference>
<dbReference type="InterPro" id="IPR014729">
    <property type="entry name" value="Rossmann-like_a/b/a_fold"/>
</dbReference>
<dbReference type="InterPro" id="IPR011063">
    <property type="entry name" value="TilS/TtcA_N"/>
</dbReference>
<dbReference type="InterPro" id="IPR012089">
    <property type="entry name" value="tRNA_Cyd_32_2_STrfase"/>
</dbReference>
<dbReference type="InterPro" id="IPR035107">
    <property type="entry name" value="tRNA_thiolation_TtcA_Ctu1"/>
</dbReference>
<dbReference type="NCBIfam" id="NF007972">
    <property type="entry name" value="PRK10696.1"/>
    <property type="match status" value="1"/>
</dbReference>
<dbReference type="PANTHER" id="PTHR43686:SF1">
    <property type="entry name" value="AMINOTRAN_5 DOMAIN-CONTAINING PROTEIN"/>
    <property type="match status" value="1"/>
</dbReference>
<dbReference type="PANTHER" id="PTHR43686">
    <property type="entry name" value="SULFURTRANSFERASE-RELATED"/>
    <property type="match status" value="1"/>
</dbReference>
<dbReference type="Pfam" id="PF01171">
    <property type="entry name" value="ATP_bind_3"/>
    <property type="match status" value="1"/>
</dbReference>
<dbReference type="PIRSF" id="PIRSF004976">
    <property type="entry name" value="ATPase_YdaO"/>
    <property type="match status" value="1"/>
</dbReference>
<dbReference type="SUPFAM" id="SSF52402">
    <property type="entry name" value="Adenine nucleotide alpha hydrolases-like"/>
    <property type="match status" value="1"/>
</dbReference>
<keyword id="KW-0004">4Fe-4S</keyword>
<keyword id="KW-0067">ATP-binding</keyword>
<keyword id="KW-0963">Cytoplasm</keyword>
<keyword id="KW-0408">Iron</keyword>
<keyword id="KW-0411">Iron-sulfur</keyword>
<keyword id="KW-0460">Magnesium</keyword>
<keyword id="KW-0479">Metal-binding</keyword>
<keyword id="KW-0547">Nucleotide-binding</keyword>
<keyword id="KW-0694">RNA-binding</keyword>
<keyword id="KW-0808">Transferase</keyword>
<keyword id="KW-0819">tRNA processing</keyword>
<keyword id="KW-0820">tRNA-binding</keyword>